<comment type="function">
    <text evidence="1">Protein S19 forms a complex with S13 that binds strongly to the 16S ribosomal RNA.</text>
</comment>
<comment type="similarity">
    <text evidence="1">Belongs to the universal ribosomal protein uS19 family.</text>
</comment>
<proteinExistence type="inferred from homology"/>
<accession>A7GK24</accession>
<reference key="1">
    <citation type="journal article" date="2008" name="Chem. Biol. Interact.">
        <title>Extending the Bacillus cereus group genomics to putative food-borne pathogens of different toxicity.</title>
        <authorList>
            <person name="Lapidus A."/>
            <person name="Goltsman E."/>
            <person name="Auger S."/>
            <person name="Galleron N."/>
            <person name="Segurens B."/>
            <person name="Dossat C."/>
            <person name="Land M.L."/>
            <person name="Broussolle V."/>
            <person name="Brillard J."/>
            <person name="Guinebretiere M.-H."/>
            <person name="Sanchis V."/>
            <person name="Nguen-the C."/>
            <person name="Lereclus D."/>
            <person name="Richardson P."/>
            <person name="Wincker P."/>
            <person name="Weissenbach J."/>
            <person name="Ehrlich S.D."/>
            <person name="Sorokin A."/>
        </authorList>
    </citation>
    <scope>NUCLEOTIDE SEQUENCE [LARGE SCALE GENOMIC DNA]</scope>
    <source>
        <strain>DSM 22905 / CIP 110041 / 391-98 / NVH 391-98</strain>
    </source>
</reference>
<sequence>MARSLKKGPFVDDHLMSKIAKLNETEQKQVVKTWSRRSTIFPQFIGHTIAVYDGRKHVPVYITEDMVGHKLGEFAPTRTYKGHDADDKKTRR</sequence>
<organism>
    <name type="scientific">Bacillus cytotoxicus (strain DSM 22905 / CIP 110041 / 391-98 / NVH 391-98)</name>
    <dbReference type="NCBI Taxonomy" id="315749"/>
    <lineage>
        <taxon>Bacteria</taxon>
        <taxon>Bacillati</taxon>
        <taxon>Bacillota</taxon>
        <taxon>Bacilli</taxon>
        <taxon>Bacillales</taxon>
        <taxon>Bacillaceae</taxon>
        <taxon>Bacillus</taxon>
        <taxon>Bacillus cereus group</taxon>
    </lineage>
</organism>
<gene>
    <name evidence="1" type="primary">rpsS</name>
    <name type="ordered locus">Bcer98_0108</name>
</gene>
<evidence type="ECO:0000255" key="1">
    <source>
        <dbReference type="HAMAP-Rule" id="MF_00531"/>
    </source>
</evidence>
<evidence type="ECO:0000305" key="2"/>
<dbReference type="EMBL" id="CP000764">
    <property type="protein sequence ID" value="ABS20482.1"/>
    <property type="molecule type" value="Genomic_DNA"/>
</dbReference>
<dbReference type="RefSeq" id="WP_011983249.1">
    <property type="nucleotide sequence ID" value="NC_009674.1"/>
</dbReference>
<dbReference type="SMR" id="A7GK24"/>
<dbReference type="STRING" id="315749.Bcer98_0108"/>
<dbReference type="GeneID" id="33895429"/>
<dbReference type="KEGG" id="bcy:Bcer98_0108"/>
<dbReference type="eggNOG" id="COG0185">
    <property type="taxonomic scope" value="Bacteria"/>
</dbReference>
<dbReference type="HOGENOM" id="CLU_144911_0_1_9"/>
<dbReference type="OrthoDB" id="9797833at2"/>
<dbReference type="Proteomes" id="UP000002300">
    <property type="component" value="Chromosome"/>
</dbReference>
<dbReference type="GO" id="GO:0005737">
    <property type="term" value="C:cytoplasm"/>
    <property type="evidence" value="ECO:0007669"/>
    <property type="project" value="UniProtKB-ARBA"/>
</dbReference>
<dbReference type="GO" id="GO:0015935">
    <property type="term" value="C:small ribosomal subunit"/>
    <property type="evidence" value="ECO:0007669"/>
    <property type="project" value="InterPro"/>
</dbReference>
<dbReference type="GO" id="GO:0019843">
    <property type="term" value="F:rRNA binding"/>
    <property type="evidence" value="ECO:0007669"/>
    <property type="project" value="UniProtKB-UniRule"/>
</dbReference>
<dbReference type="GO" id="GO:0003735">
    <property type="term" value="F:structural constituent of ribosome"/>
    <property type="evidence" value="ECO:0007669"/>
    <property type="project" value="InterPro"/>
</dbReference>
<dbReference type="GO" id="GO:0000028">
    <property type="term" value="P:ribosomal small subunit assembly"/>
    <property type="evidence" value="ECO:0007669"/>
    <property type="project" value="TreeGrafter"/>
</dbReference>
<dbReference type="GO" id="GO:0006412">
    <property type="term" value="P:translation"/>
    <property type="evidence" value="ECO:0007669"/>
    <property type="project" value="UniProtKB-UniRule"/>
</dbReference>
<dbReference type="FunFam" id="3.30.860.10:FF:000001">
    <property type="entry name" value="30S ribosomal protein S19"/>
    <property type="match status" value="1"/>
</dbReference>
<dbReference type="Gene3D" id="3.30.860.10">
    <property type="entry name" value="30s Ribosomal Protein S19, Chain A"/>
    <property type="match status" value="1"/>
</dbReference>
<dbReference type="HAMAP" id="MF_00531">
    <property type="entry name" value="Ribosomal_uS19"/>
    <property type="match status" value="1"/>
</dbReference>
<dbReference type="InterPro" id="IPR002222">
    <property type="entry name" value="Ribosomal_uS19"/>
</dbReference>
<dbReference type="InterPro" id="IPR005732">
    <property type="entry name" value="Ribosomal_uS19_bac-type"/>
</dbReference>
<dbReference type="InterPro" id="IPR020934">
    <property type="entry name" value="Ribosomal_uS19_CS"/>
</dbReference>
<dbReference type="InterPro" id="IPR023575">
    <property type="entry name" value="Ribosomal_uS19_SF"/>
</dbReference>
<dbReference type="NCBIfam" id="TIGR01050">
    <property type="entry name" value="rpsS_bact"/>
    <property type="match status" value="1"/>
</dbReference>
<dbReference type="PANTHER" id="PTHR11880">
    <property type="entry name" value="RIBOSOMAL PROTEIN S19P FAMILY MEMBER"/>
    <property type="match status" value="1"/>
</dbReference>
<dbReference type="PANTHER" id="PTHR11880:SF8">
    <property type="entry name" value="SMALL RIBOSOMAL SUBUNIT PROTEIN US19M"/>
    <property type="match status" value="1"/>
</dbReference>
<dbReference type="Pfam" id="PF00203">
    <property type="entry name" value="Ribosomal_S19"/>
    <property type="match status" value="1"/>
</dbReference>
<dbReference type="PIRSF" id="PIRSF002144">
    <property type="entry name" value="Ribosomal_S19"/>
    <property type="match status" value="1"/>
</dbReference>
<dbReference type="PRINTS" id="PR00975">
    <property type="entry name" value="RIBOSOMALS19"/>
</dbReference>
<dbReference type="SUPFAM" id="SSF54570">
    <property type="entry name" value="Ribosomal protein S19"/>
    <property type="match status" value="1"/>
</dbReference>
<dbReference type="PROSITE" id="PS00323">
    <property type="entry name" value="RIBOSOMAL_S19"/>
    <property type="match status" value="1"/>
</dbReference>
<keyword id="KW-0687">Ribonucleoprotein</keyword>
<keyword id="KW-0689">Ribosomal protein</keyword>
<keyword id="KW-0694">RNA-binding</keyword>
<keyword id="KW-0699">rRNA-binding</keyword>
<name>RS19_BACCN</name>
<feature type="chain" id="PRO_1000081757" description="Small ribosomal subunit protein uS19">
    <location>
        <begin position="1"/>
        <end position="92"/>
    </location>
</feature>
<protein>
    <recommendedName>
        <fullName evidence="1">Small ribosomal subunit protein uS19</fullName>
    </recommendedName>
    <alternativeName>
        <fullName evidence="2">30S ribosomal protein S19</fullName>
    </alternativeName>
</protein>